<accession>Q1LVF3</accession>
<accession>A0A0R4IJJ6</accession>
<organism evidence="6">
    <name type="scientific">Danio rerio</name>
    <name type="common">Zebrafish</name>
    <name type="synonym">Brachydanio rerio</name>
    <dbReference type="NCBI Taxonomy" id="7955"/>
    <lineage>
        <taxon>Eukaryota</taxon>
        <taxon>Metazoa</taxon>
        <taxon>Chordata</taxon>
        <taxon>Craniata</taxon>
        <taxon>Vertebrata</taxon>
        <taxon>Euteleostomi</taxon>
        <taxon>Actinopterygii</taxon>
        <taxon>Neopterygii</taxon>
        <taxon>Teleostei</taxon>
        <taxon>Ostariophysi</taxon>
        <taxon>Cypriniformes</taxon>
        <taxon>Danionidae</taxon>
        <taxon>Danioninae</taxon>
        <taxon>Danio</taxon>
    </lineage>
</organism>
<keyword id="KW-0025">Alternative splicing</keyword>
<keyword id="KW-0963">Cytoplasm</keyword>
<keyword id="KW-0866">Nonsense-mediated mRNA decay</keyword>
<keyword id="KW-0539">Nucleus</keyword>
<keyword id="KW-1185">Reference proteome</keyword>
<keyword id="KW-0677">Repeat</keyword>
<keyword id="KW-0802">TPR repeat</keyword>
<protein>
    <recommendedName>
        <fullName evidence="7">Nonsense-mediated mRNA decay factor SMG7</fullName>
    </recommendedName>
    <alternativeName>
        <fullName evidence="2">SMG-7 homolog</fullName>
    </alternativeName>
</protein>
<reference evidence="6" key="1">
    <citation type="journal article" date="2013" name="Nature">
        <title>The zebrafish reference genome sequence and its relationship to the human genome.</title>
        <authorList>
            <person name="Howe K."/>
            <person name="Clark M.D."/>
            <person name="Torroja C.F."/>
            <person name="Torrance J."/>
            <person name="Berthelot C."/>
            <person name="Muffato M."/>
            <person name="Collins J.E."/>
            <person name="Humphray S."/>
            <person name="McLaren K."/>
            <person name="Matthews L."/>
            <person name="McLaren S."/>
            <person name="Sealy I."/>
            <person name="Caccamo M."/>
            <person name="Churcher C."/>
            <person name="Scott C."/>
            <person name="Barrett J.C."/>
            <person name="Koch R."/>
            <person name="Rauch G.J."/>
            <person name="White S."/>
            <person name="Chow W."/>
            <person name="Kilian B."/>
            <person name="Quintais L.T."/>
            <person name="Guerra-Assuncao J.A."/>
            <person name="Zhou Y."/>
            <person name="Gu Y."/>
            <person name="Yen J."/>
            <person name="Vogel J.H."/>
            <person name="Eyre T."/>
            <person name="Redmond S."/>
            <person name="Banerjee R."/>
            <person name="Chi J."/>
            <person name="Fu B."/>
            <person name="Langley E."/>
            <person name="Maguire S.F."/>
            <person name="Laird G.K."/>
            <person name="Lloyd D."/>
            <person name="Kenyon E."/>
            <person name="Donaldson S."/>
            <person name="Sehra H."/>
            <person name="Almeida-King J."/>
            <person name="Loveland J."/>
            <person name="Trevanion S."/>
            <person name="Jones M."/>
            <person name="Quail M."/>
            <person name="Willey D."/>
            <person name="Hunt A."/>
            <person name="Burton J."/>
            <person name="Sims S."/>
            <person name="McLay K."/>
            <person name="Plumb B."/>
            <person name="Davis J."/>
            <person name="Clee C."/>
            <person name="Oliver K."/>
            <person name="Clark R."/>
            <person name="Riddle C."/>
            <person name="Elliot D."/>
            <person name="Threadgold G."/>
            <person name="Harden G."/>
            <person name="Ware D."/>
            <person name="Begum S."/>
            <person name="Mortimore B."/>
            <person name="Kerry G."/>
            <person name="Heath P."/>
            <person name="Phillimore B."/>
            <person name="Tracey A."/>
            <person name="Corby N."/>
            <person name="Dunn M."/>
            <person name="Johnson C."/>
            <person name="Wood J."/>
            <person name="Clark S."/>
            <person name="Pelan S."/>
            <person name="Griffiths G."/>
            <person name="Smith M."/>
            <person name="Glithero R."/>
            <person name="Howden P."/>
            <person name="Barker N."/>
            <person name="Lloyd C."/>
            <person name="Stevens C."/>
            <person name="Harley J."/>
            <person name="Holt K."/>
            <person name="Panagiotidis G."/>
            <person name="Lovell J."/>
            <person name="Beasley H."/>
            <person name="Henderson C."/>
            <person name="Gordon D."/>
            <person name="Auger K."/>
            <person name="Wright D."/>
            <person name="Collins J."/>
            <person name="Raisen C."/>
            <person name="Dyer L."/>
            <person name="Leung K."/>
            <person name="Robertson L."/>
            <person name="Ambridge K."/>
            <person name="Leongamornlert D."/>
            <person name="McGuire S."/>
            <person name="Gilderthorp R."/>
            <person name="Griffiths C."/>
            <person name="Manthravadi D."/>
            <person name="Nichol S."/>
            <person name="Barker G."/>
            <person name="Whitehead S."/>
            <person name="Kay M."/>
            <person name="Brown J."/>
            <person name="Murnane C."/>
            <person name="Gray E."/>
            <person name="Humphries M."/>
            <person name="Sycamore N."/>
            <person name="Barker D."/>
            <person name="Saunders D."/>
            <person name="Wallis J."/>
            <person name="Babbage A."/>
            <person name="Hammond S."/>
            <person name="Mashreghi-Mohammadi M."/>
            <person name="Barr L."/>
            <person name="Martin S."/>
            <person name="Wray P."/>
            <person name="Ellington A."/>
            <person name="Matthews N."/>
            <person name="Ellwood M."/>
            <person name="Woodmansey R."/>
            <person name="Clark G."/>
            <person name="Cooper J."/>
            <person name="Tromans A."/>
            <person name="Grafham D."/>
            <person name="Skuce C."/>
            <person name="Pandian R."/>
            <person name="Andrews R."/>
            <person name="Harrison E."/>
            <person name="Kimberley A."/>
            <person name="Garnett J."/>
            <person name="Fosker N."/>
            <person name="Hall R."/>
            <person name="Garner P."/>
            <person name="Kelly D."/>
            <person name="Bird C."/>
            <person name="Palmer S."/>
            <person name="Gehring I."/>
            <person name="Berger A."/>
            <person name="Dooley C.M."/>
            <person name="Ersan-Urun Z."/>
            <person name="Eser C."/>
            <person name="Geiger H."/>
            <person name="Geisler M."/>
            <person name="Karotki L."/>
            <person name="Kirn A."/>
            <person name="Konantz J."/>
            <person name="Konantz M."/>
            <person name="Oberlander M."/>
            <person name="Rudolph-Geiger S."/>
            <person name="Teucke M."/>
            <person name="Lanz C."/>
            <person name="Raddatz G."/>
            <person name="Osoegawa K."/>
            <person name="Zhu B."/>
            <person name="Rapp A."/>
            <person name="Widaa S."/>
            <person name="Langford C."/>
            <person name="Yang F."/>
            <person name="Schuster S.C."/>
            <person name="Carter N.P."/>
            <person name="Harrow J."/>
            <person name="Ning Z."/>
            <person name="Herrero J."/>
            <person name="Searle S.M."/>
            <person name="Enright A."/>
            <person name="Geisler R."/>
            <person name="Plasterk R.H."/>
            <person name="Lee C."/>
            <person name="Westerfield M."/>
            <person name="de Jong P.J."/>
            <person name="Zon L.I."/>
            <person name="Postlethwait J.H."/>
            <person name="Nusslein-Volhard C."/>
            <person name="Hubbard T.J."/>
            <person name="Roest Crollius H."/>
            <person name="Rogers J."/>
            <person name="Stemple D.L."/>
        </authorList>
    </citation>
    <scope>NUCLEOTIDE SEQUENCE [LARGE SCALE GENOMIC DNA]</scope>
    <source>
        <strain evidence="6">Tuebingen</strain>
    </source>
</reference>
<reference evidence="5" key="2">
    <citation type="journal article" date="2009" name="Mol. Cell. Biol.">
        <title>Nonsense-mediated mRNA decay effectors are essential for zebrafish embryonic development and survival.</title>
        <authorList>
            <person name="Wittkopp N."/>
            <person name="Huntzinger E."/>
            <person name="Weiler C."/>
            <person name="Sauliere J."/>
            <person name="Schmidt S."/>
            <person name="Sonawane M."/>
            <person name="Izaurralde E."/>
        </authorList>
    </citation>
    <scope>FUNCTION</scope>
    <scope>DEVELOPMENTAL STAGE</scope>
    <scope>DISRUPTION PHENOTYPE</scope>
</reference>
<proteinExistence type="evidence at transcript level"/>
<sequence>MNLCAQYLRQAEALKADMTDSKLGAAEVWTSRQALQDLYQKMLVTDLEYALDKKVEQDLWNHAFKNQITTLQSQAKNRANPNRSEVQANLSLFLEAASGFYTQLLQELCTVFNVDLPCRVKSSQLGIISNKQSSTSAIVKPQPSSCSYICQHCLVHLGDIARYRNQTSQAESYYRHAAQLVPSNGQPYNQLAILASSKGDHLTTIFYYCRSIAVKFPFPAASTNLQKALSKALESRDEVKTKWSVSDFIKAFIKFHGHVYLCKSLDKLNTLREKLEEQFQRLILQKAFSSQQLVHITVINLFELHHLRDLSNEADEHSYSSDEQISWIQLLGLFMSFLGVMLSRALLNKNREEIMGECPLPAIKVSLDWLRLRPTVFNESAMDKRQYIWPWLVSILNSFQPKEEDVSNASVIPLPEEFELQGFLALRPALRMLDFSKGHQGIVIGKESLLIHARHQRLISLGKWVADNQPRLIQCRMSDGLVLFITDIPEIVVEEPQEKDTPVLQESSNGEQTPNESTHGLKSVLSAGKNQNSGLDGSERPVVTFKENIKPREQSREQNRNQNQRDTGKDRAGFNKGNGVQGKNEQKKEGKRKSEVKKNSHDKTTDAGKQVKTQTELRKTPVSEARKTPVTQTQTTCSSQFIPIHHPGAFPPLPSRPGFPPPAYVIPPPVAFSMSPGFTFPTGVSVPAPFLQTASHPQSANPVQTGKPSHIPYSQQRPSGPVALNQGPPQPQQTQPPPPQTSQQALQQSVQLQLQQQQQQQQQQQQQQQQSPTKQSSQLGKSPPHHHSMQQSYMQVPEQPGQMWNQHQNQPGMQKMPMQMPVKQPFFMPTQDPMKLFEHPMSMQPQQPSMDKKMKFPEVKVQDFYWDPPYHMAGEGRSTMADRMGKRQPGVFCSDQENMPRGPPYEDNKSSPLLPPDLLKTLADFEEEEELLFTKPHDFYQALAGPLNSAPGRNMFLPNQSRLDSGADVIGQSSLLPRFSIQDNSYQNNSIFSEAYGKNMTPSSKPDAPMMHQEPSLYSLFEGNPWSPSLPASSDHSTPASQSPHSSNPSSLPSSPPTHSHGSMPFSNFGPIGTPDSRDRRANDRWKAEKTGVSGFGLDYLPSASTSSVPETNSWHQGAPTSTWAAQDMPMEDSSTVLLDSFKSIWSSSMMQPGPSALEQLLMQQKQKQQRGHGNMNPPH</sequence>
<comment type="function">
    <text evidence="2 4">Plays a role in nonsense-mediated mRNA decay (By similarity). Recruits UPF1 to cytoplasmic mRNA decay bodies (By similarity). Together with SMG5 is thought to provide a link to the mRNA degradation machinery involving exonucleolytic pathways, and to serve as an adapter for UPF1 to protein phosphatase 2A (PP2A), thereby triggering UPF1 dephosphorylation (By similarity). Required for normal embryonic development (PubMed:19414594).</text>
</comment>
<comment type="subcellular location">
    <subcellularLocation>
        <location evidence="2">Cytoplasm</location>
    </subcellularLocation>
    <subcellularLocation>
        <location evidence="2">Nucleus</location>
    </subcellularLocation>
</comment>
<comment type="alternative products">
    <event type="alternative splicing"/>
    <isoform>
        <id>Q1LVF3-1</id>
        <name>1</name>
        <sequence type="displayed"/>
    </isoform>
    <isoform>
        <id>Q1LVF3-2</id>
        <name>2</name>
        <sequence type="described" ref="VSP_061251"/>
    </isoform>
</comment>
<comment type="developmental stage">
    <text evidence="4">Expressed during early cleavage, gastrulation and at 1 day post-fertilization.</text>
</comment>
<comment type="disruption phenotype">
    <text evidence="4">Morpholino knockdown leads to a phenotype ranging in severity from weak to severe that includes an elongated hindbrain, altered midbrain-hindbrain boundary, stacked somites in severe phenotypes and a mortality rate of 97% at 5 days post-fertilization.</text>
</comment>
<dbReference type="EMBL" id="BX681417">
    <property type="status" value="NOT_ANNOTATED_CDS"/>
    <property type="molecule type" value="Genomic_DNA"/>
</dbReference>
<dbReference type="RefSeq" id="XP_005171365.1">
    <molecule id="Q1LVF3-1"/>
    <property type="nucleotide sequence ID" value="XM_005171308.5"/>
</dbReference>
<dbReference type="SMR" id="Q1LVF3"/>
<dbReference type="FunCoup" id="Q1LVF3">
    <property type="interactions" value="2246"/>
</dbReference>
<dbReference type="STRING" id="7955.ENSDARP00000135427"/>
<dbReference type="PaxDb" id="7955-ENSDARP00000080411"/>
<dbReference type="Ensembl" id="ENSDART00000085976">
    <molecule id="Q1LVF3-1"/>
    <property type="protein sequence ID" value="ENSDARP00000080411"/>
    <property type="gene ID" value="ENSDARG00000060767"/>
</dbReference>
<dbReference type="GeneID" id="565575"/>
<dbReference type="AGR" id="ZFIN:ZDB-GENE-030131-9122"/>
<dbReference type="CTD" id="9887"/>
<dbReference type="ZFIN" id="ZDB-GENE-030131-9122">
    <property type="gene designation" value="smg7"/>
</dbReference>
<dbReference type="eggNOG" id="KOG2162">
    <property type="taxonomic scope" value="Eukaryota"/>
</dbReference>
<dbReference type="InParanoid" id="Q1LVF3"/>
<dbReference type="OMA" id="WHQAGSA"/>
<dbReference type="OrthoDB" id="69928at2759"/>
<dbReference type="TreeFam" id="TF327119"/>
<dbReference type="Reactome" id="R-DRE-975957">
    <property type="pathway name" value="Nonsense Mediated Decay (NMD) enhanced by the Exon Junction Complex (EJC)"/>
</dbReference>
<dbReference type="PRO" id="PR:Q1LVF3"/>
<dbReference type="Proteomes" id="UP000000437">
    <property type="component" value="Chromosome 2"/>
</dbReference>
<dbReference type="Bgee" id="ENSDARG00000060767">
    <property type="expression patterns" value="Expressed in mature ovarian follicle and 27 other cell types or tissues"/>
</dbReference>
<dbReference type="ExpressionAtlas" id="Q1LVF3">
    <property type="expression patterns" value="baseline"/>
</dbReference>
<dbReference type="GO" id="GO:0005737">
    <property type="term" value="C:cytoplasm"/>
    <property type="evidence" value="ECO:0007669"/>
    <property type="project" value="UniProtKB-SubCell"/>
</dbReference>
<dbReference type="GO" id="GO:0005697">
    <property type="term" value="C:telomerase holoenzyme complex"/>
    <property type="evidence" value="ECO:0000318"/>
    <property type="project" value="GO_Central"/>
</dbReference>
<dbReference type="GO" id="GO:0070034">
    <property type="term" value="F:telomerase RNA binding"/>
    <property type="evidence" value="ECO:0000318"/>
    <property type="project" value="GO_Central"/>
</dbReference>
<dbReference type="GO" id="GO:0042162">
    <property type="term" value="F:telomeric DNA binding"/>
    <property type="evidence" value="ECO:0000318"/>
    <property type="project" value="GO_Central"/>
</dbReference>
<dbReference type="GO" id="GO:0043009">
    <property type="term" value="P:chordate embryonic development"/>
    <property type="evidence" value="ECO:0000315"/>
    <property type="project" value="ZFIN"/>
</dbReference>
<dbReference type="GO" id="GO:0000184">
    <property type="term" value="P:nuclear-transcribed mRNA catabolic process, nonsense-mediated decay"/>
    <property type="evidence" value="ECO:0000318"/>
    <property type="project" value="GO_Central"/>
</dbReference>
<dbReference type="Gene3D" id="1.25.40.10">
    <property type="entry name" value="Tetratricopeptide repeat domain"/>
    <property type="match status" value="1"/>
</dbReference>
<dbReference type="InterPro" id="IPR018834">
    <property type="entry name" value="DNA/RNA-bd_Est1-type"/>
</dbReference>
<dbReference type="InterPro" id="IPR019458">
    <property type="entry name" value="Est1-like_N"/>
</dbReference>
<dbReference type="InterPro" id="IPR045153">
    <property type="entry name" value="Est1/Ebs1-like"/>
</dbReference>
<dbReference type="InterPro" id="IPR011990">
    <property type="entry name" value="TPR-like_helical_dom_sf"/>
</dbReference>
<dbReference type="PANTHER" id="PTHR15696:SF5">
    <property type="entry name" value="NONSENSE-MEDIATED MRNA DECAY FACTOR SMG7"/>
    <property type="match status" value="1"/>
</dbReference>
<dbReference type="PANTHER" id="PTHR15696">
    <property type="entry name" value="SMG-7 SUPPRESSOR WITH MORPHOLOGICAL EFFECT ON GENITALIA PROTEIN 7"/>
    <property type="match status" value="1"/>
</dbReference>
<dbReference type="Pfam" id="PF10374">
    <property type="entry name" value="EST1"/>
    <property type="match status" value="1"/>
</dbReference>
<dbReference type="Pfam" id="PF10373">
    <property type="entry name" value="EST1_DNA_bind"/>
    <property type="match status" value="1"/>
</dbReference>
<dbReference type="SUPFAM" id="SSF48452">
    <property type="entry name" value="TPR-like"/>
    <property type="match status" value="1"/>
</dbReference>
<name>SMG7_DANRE</name>
<evidence type="ECO:0000250" key="1">
    <source>
        <dbReference type="UniProtKB" id="Q5RJH6"/>
    </source>
</evidence>
<evidence type="ECO:0000250" key="2">
    <source>
        <dbReference type="UniProtKB" id="Q92540"/>
    </source>
</evidence>
<evidence type="ECO:0000256" key="3">
    <source>
        <dbReference type="SAM" id="MobiDB-lite"/>
    </source>
</evidence>
<evidence type="ECO:0000269" key="4">
    <source>
    </source>
</evidence>
<evidence type="ECO:0000305" key="5"/>
<evidence type="ECO:0000312" key="6">
    <source>
        <dbReference type="Proteomes" id="UP000000437"/>
    </source>
</evidence>
<evidence type="ECO:0000312" key="7">
    <source>
        <dbReference type="ZFIN" id="ZDB-GENE-030131-9122"/>
    </source>
</evidence>
<gene>
    <name evidence="7" type="primary">smg7</name>
</gene>
<feature type="chain" id="PRO_0000454184" description="Nonsense-mediated mRNA decay factor SMG7">
    <location>
        <begin position="1"/>
        <end position="1180"/>
    </location>
</feature>
<feature type="repeat" description="TPR 1" evidence="1">
    <location>
        <begin position="151"/>
        <end position="184"/>
    </location>
</feature>
<feature type="repeat" description="TPR 2" evidence="1">
    <location>
        <begin position="186"/>
        <end position="218"/>
    </location>
</feature>
<feature type="region of interest" description="Disordered" evidence="3">
    <location>
        <begin position="496"/>
        <end position="636"/>
    </location>
</feature>
<feature type="region of interest" description="Disordered" evidence="3">
    <location>
        <begin position="692"/>
        <end position="795"/>
    </location>
</feature>
<feature type="region of interest" description="Disordered" evidence="3">
    <location>
        <begin position="893"/>
        <end position="913"/>
    </location>
</feature>
<feature type="region of interest" description="Disordered" evidence="3">
    <location>
        <begin position="1019"/>
        <end position="1127"/>
    </location>
</feature>
<feature type="region of interest" description="Disordered" evidence="3">
    <location>
        <begin position="1148"/>
        <end position="1180"/>
    </location>
</feature>
<feature type="compositionally biased region" description="Polar residues" evidence="3">
    <location>
        <begin position="504"/>
        <end position="520"/>
    </location>
</feature>
<feature type="compositionally biased region" description="Basic and acidic residues" evidence="3">
    <location>
        <begin position="547"/>
        <end position="559"/>
    </location>
</feature>
<feature type="compositionally biased region" description="Basic and acidic residues" evidence="3">
    <location>
        <begin position="584"/>
        <end position="606"/>
    </location>
</feature>
<feature type="compositionally biased region" description="Basic and acidic residues" evidence="3">
    <location>
        <begin position="615"/>
        <end position="627"/>
    </location>
</feature>
<feature type="compositionally biased region" description="Polar residues" evidence="3">
    <location>
        <begin position="692"/>
        <end position="718"/>
    </location>
</feature>
<feature type="compositionally biased region" description="Pro residues" evidence="3">
    <location>
        <begin position="728"/>
        <end position="740"/>
    </location>
</feature>
<feature type="compositionally biased region" description="Low complexity" evidence="3">
    <location>
        <begin position="741"/>
        <end position="778"/>
    </location>
</feature>
<feature type="compositionally biased region" description="Polar residues" evidence="3">
    <location>
        <begin position="1026"/>
        <end position="1038"/>
    </location>
</feature>
<feature type="compositionally biased region" description="Low complexity" evidence="3">
    <location>
        <begin position="1039"/>
        <end position="1065"/>
    </location>
</feature>
<feature type="compositionally biased region" description="Basic and acidic residues" evidence="3">
    <location>
        <begin position="1076"/>
        <end position="1090"/>
    </location>
</feature>
<feature type="compositionally biased region" description="Polar residues" evidence="3">
    <location>
        <begin position="1103"/>
        <end position="1125"/>
    </location>
</feature>
<feature type="splice variant" id="VSP_061251" description="In isoform 2.">
    <location>
        <begin position="907"/>
        <end position="956"/>
    </location>
</feature>